<name>RS12A_SCHPO</name>
<comment type="function">
    <text evidence="1">Component of the ribosome, a large ribonucleoprotein complex responsible for the synthesis of proteins in the cell. The small ribosomal subunit (SSU) binds messenger RNAs (mRNAs) and translates the encoded message by selecting cognate aminoacyl-transfer RNA (tRNA) molecules. The large subunit (LSU) contains the ribosomal catalytic site termed the peptidyl transferase center (PTC), which catalyzes the formation of peptide bonds, thereby polymerizing the amino acids delivered by tRNAs into a polypeptide chain. The nascent polypeptides leave the ribosome through a tunnel in the LSU and interact with protein factors that function in enzymatic processing, targeting, and the membrane insertion of nascent chains at the exit of the ribosomal tunnel.</text>
</comment>
<comment type="subunit">
    <text evidence="1">Component of the small ribosomal subunit (SSU). Mature yeast ribosomes consist of a small (40S) and a large (60S) subunit. The 40S small subunit contains 1 molecule of ribosomal RNA (18S rRNA) and at least 33 different proteins. The large 60S subunit contains 3 rRNA molecules (25S, 5.8S and 5S rRNA) and at least 46 different proteins.</text>
</comment>
<comment type="subcellular location">
    <subcellularLocation>
        <location evidence="1">Cytoplasm</location>
    </subcellularLocation>
</comment>
<comment type="miscellaneous">
    <text>There are 2 genes for eS12 in S.pombe.</text>
</comment>
<comment type="similarity">
    <text evidence="2">Belongs to the eukaryotic ribosomal protein eS12 family.</text>
</comment>
<protein>
    <recommendedName>
        <fullName evidence="2">Small ribosomal subunit protein eS12A</fullName>
    </recommendedName>
    <alternativeName>
        <fullName>40S ribosomal protein S12-A</fullName>
    </alternativeName>
</protein>
<reference key="1">
    <citation type="journal article" date="2002" name="Nature">
        <title>The genome sequence of Schizosaccharomyces pombe.</title>
        <authorList>
            <person name="Wood V."/>
            <person name="Gwilliam R."/>
            <person name="Rajandream M.A."/>
            <person name="Lyne M.H."/>
            <person name="Lyne R."/>
            <person name="Stewart A."/>
            <person name="Sgouros J.G."/>
            <person name="Peat N."/>
            <person name="Hayles J."/>
            <person name="Baker S.G."/>
            <person name="Basham D."/>
            <person name="Bowman S."/>
            <person name="Brooks K."/>
            <person name="Brown D."/>
            <person name="Brown S."/>
            <person name="Chillingworth T."/>
            <person name="Churcher C.M."/>
            <person name="Collins M."/>
            <person name="Connor R."/>
            <person name="Cronin A."/>
            <person name="Davis P."/>
            <person name="Feltwell T."/>
            <person name="Fraser A."/>
            <person name="Gentles S."/>
            <person name="Goble A."/>
            <person name="Hamlin N."/>
            <person name="Harris D.E."/>
            <person name="Hidalgo J."/>
            <person name="Hodgson G."/>
            <person name="Holroyd S."/>
            <person name="Hornsby T."/>
            <person name="Howarth S."/>
            <person name="Huckle E.J."/>
            <person name="Hunt S."/>
            <person name="Jagels K."/>
            <person name="James K.D."/>
            <person name="Jones L."/>
            <person name="Jones M."/>
            <person name="Leather S."/>
            <person name="McDonald S."/>
            <person name="McLean J."/>
            <person name="Mooney P."/>
            <person name="Moule S."/>
            <person name="Mungall K.L."/>
            <person name="Murphy L.D."/>
            <person name="Niblett D."/>
            <person name="Odell C."/>
            <person name="Oliver K."/>
            <person name="O'Neil S."/>
            <person name="Pearson D."/>
            <person name="Quail M.A."/>
            <person name="Rabbinowitsch E."/>
            <person name="Rutherford K.M."/>
            <person name="Rutter S."/>
            <person name="Saunders D."/>
            <person name="Seeger K."/>
            <person name="Sharp S."/>
            <person name="Skelton J."/>
            <person name="Simmonds M.N."/>
            <person name="Squares R."/>
            <person name="Squares S."/>
            <person name="Stevens K."/>
            <person name="Taylor K."/>
            <person name="Taylor R.G."/>
            <person name="Tivey A."/>
            <person name="Walsh S.V."/>
            <person name="Warren T."/>
            <person name="Whitehead S."/>
            <person name="Woodward J.R."/>
            <person name="Volckaert G."/>
            <person name="Aert R."/>
            <person name="Robben J."/>
            <person name="Grymonprez B."/>
            <person name="Weltjens I."/>
            <person name="Vanstreels E."/>
            <person name="Rieger M."/>
            <person name="Schaefer M."/>
            <person name="Mueller-Auer S."/>
            <person name="Gabel C."/>
            <person name="Fuchs M."/>
            <person name="Duesterhoeft A."/>
            <person name="Fritzc C."/>
            <person name="Holzer E."/>
            <person name="Moestl D."/>
            <person name="Hilbert H."/>
            <person name="Borzym K."/>
            <person name="Langer I."/>
            <person name="Beck A."/>
            <person name="Lehrach H."/>
            <person name="Reinhardt R."/>
            <person name="Pohl T.M."/>
            <person name="Eger P."/>
            <person name="Zimmermann W."/>
            <person name="Wedler H."/>
            <person name="Wambutt R."/>
            <person name="Purnelle B."/>
            <person name="Goffeau A."/>
            <person name="Cadieu E."/>
            <person name="Dreano S."/>
            <person name="Gloux S."/>
            <person name="Lelaure V."/>
            <person name="Mottier S."/>
            <person name="Galibert F."/>
            <person name="Aves S.J."/>
            <person name="Xiang Z."/>
            <person name="Hunt C."/>
            <person name="Moore K."/>
            <person name="Hurst S.M."/>
            <person name="Lucas M."/>
            <person name="Rochet M."/>
            <person name="Gaillardin C."/>
            <person name="Tallada V.A."/>
            <person name="Garzon A."/>
            <person name="Thode G."/>
            <person name="Daga R.R."/>
            <person name="Cruzado L."/>
            <person name="Jimenez J."/>
            <person name="Sanchez M."/>
            <person name="del Rey F."/>
            <person name="Benito J."/>
            <person name="Dominguez A."/>
            <person name="Revuelta J.L."/>
            <person name="Moreno S."/>
            <person name="Armstrong J."/>
            <person name="Forsburg S.L."/>
            <person name="Cerutti L."/>
            <person name="Lowe T."/>
            <person name="McCombie W.R."/>
            <person name="Paulsen I."/>
            <person name="Potashkin J."/>
            <person name="Shpakovski G.V."/>
            <person name="Ussery D."/>
            <person name="Barrell B.G."/>
            <person name="Nurse P."/>
        </authorList>
    </citation>
    <scope>NUCLEOTIDE SEQUENCE [LARGE SCALE GENOMIC DNA]</scope>
    <source>
        <strain>972 / ATCC 24843</strain>
    </source>
</reference>
<organism>
    <name type="scientific">Schizosaccharomyces pombe (strain 972 / ATCC 24843)</name>
    <name type="common">Fission yeast</name>
    <dbReference type="NCBI Taxonomy" id="284812"/>
    <lineage>
        <taxon>Eukaryota</taxon>
        <taxon>Fungi</taxon>
        <taxon>Dikarya</taxon>
        <taxon>Ascomycota</taxon>
        <taxon>Taphrinomycotina</taxon>
        <taxon>Schizosaccharomycetes</taxon>
        <taxon>Schizosaccharomycetales</taxon>
        <taxon>Schizosaccharomycetaceae</taxon>
        <taxon>Schizosaccharomyces</taxon>
    </lineage>
</organism>
<proteinExistence type="evidence at protein level"/>
<gene>
    <name type="primary">rps1201</name>
    <name type="synonym">rps12</name>
    <name type="synonym">rps12a</name>
    <name type="ORF">SPCC962.04</name>
</gene>
<sequence length="145" mass="15616">MSEQGDQIEQVDVVEEVEVEAAAPETVSVEDALKEVLKRALVHDGLARGIREASKALDRRQAHLCVLCESCDQEAYVKLVEALCAESETPLIKVADPKVLGEWAGLCVLDRDGNARKVVGCSCVAVTDYGEDSAALQKLLESFSA</sequence>
<keyword id="KW-0002">3D-structure</keyword>
<keyword id="KW-0963">Cytoplasm</keyword>
<keyword id="KW-1185">Reference proteome</keyword>
<keyword id="KW-0687">Ribonucleoprotein</keyword>
<keyword id="KW-0689">Ribosomal protein</keyword>
<dbReference type="EMBL" id="CU329672">
    <property type="protein sequence ID" value="CAA20436.1"/>
    <property type="molecule type" value="Genomic_DNA"/>
</dbReference>
<dbReference type="PIR" id="T41651">
    <property type="entry name" value="T41651"/>
</dbReference>
<dbReference type="RefSeq" id="NP_587869.1">
    <property type="nucleotide sequence ID" value="NM_001022861.2"/>
</dbReference>
<dbReference type="PDB" id="9AXT">
    <property type="method" value="EM"/>
    <property type="resolution" value="2.40 A"/>
    <property type="chains" value="AP=1-145"/>
</dbReference>
<dbReference type="PDB" id="9AXV">
    <property type="method" value="EM"/>
    <property type="resolution" value="2.40 A"/>
    <property type="chains" value="AP=1-145"/>
</dbReference>
<dbReference type="PDBsum" id="9AXT"/>
<dbReference type="PDBsum" id="9AXV"/>
<dbReference type="EMDB" id="EMD-43972"/>
<dbReference type="EMDB" id="EMD-43976"/>
<dbReference type="SMR" id="O14062"/>
<dbReference type="BioGRID" id="276146">
    <property type="interactions" value="32"/>
</dbReference>
<dbReference type="FunCoup" id="O14062">
    <property type="interactions" value="506"/>
</dbReference>
<dbReference type="STRING" id="284812.O14062"/>
<dbReference type="iPTMnet" id="O14062"/>
<dbReference type="PaxDb" id="4896-SPCC962.04.1"/>
<dbReference type="EnsemblFungi" id="SPCC962.04.1">
    <property type="protein sequence ID" value="SPCC962.04.1:pep"/>
    <property type="gene ID" value="SPCC962.04"/>
</dbReference>
<dbReference type="GeneID" id="2539588"/>
<dbReference type="KEGG" id="spo:2539588"/>
<dbReference type="PomBase" id="SPCC962.04">
    <property type="gene designation" value="rps1201"/>
</dbReference>
<dbReference type="VEuPathDB" id="FungiDB:SPCC962.04"/>
<dbReference type="eggNOG" id="KOG3406">
    <property type="taxonomic scope" value="Eukaryota"/>
</dbReference>
<dbReference type="HOGENOM" id="CLU_110343_1_1_1"/>
<dbReference type="InParanoid" id="O14062"/>
<dbReference type="OMA" id="RKAIVCF"/>
<dbReference type="PhylomeDB" id="O14062"/>
<dbReference type="Reactome" id="R-SPO-156827">
    <property type="pathway name" value="L13a-mediated translational silencing of Ceruloplasmin expression"/>
</dbReference>
<dbReference type="Reactome" id="R-SPO-1799339">
    <property type="pathway name" value="SRP-dependent cotranslational protein targeting to membrane"/>
</dbReference>
<dbReference type="Reactome" id="R-SPO-72649">
    <property type="pathway name" value="Translation initiation complex formation"/>
</dbReference>
<dbReference type="Reactome" id="R-SPO-72689">
    <property type="pathway name" value="Formation of a pool of free 40S subunits"/>
</dbReference>
<dbReference type="Reactome" id="R-SPO-72695">
    <property type="pathway name" value="Formation of the ternary complex, and subsequently, the 43S complex"/>
</dbReference>
<dbReference type="Reactome" id="R-SPO-72702">
    <property type="pathway name" value="Ribosomal scanning and start codon recognition"/>
</dbReference>
<dbReference type="Reactome" id="R-SPO-72706">
    <property type="pathway name" value="GTP hydrolysis and joining of the 60S ribosomal subunit"/>
</dbReference>
<dbReference type="Reactome" id="R-SPO-975956">
    <property type="pathway name" value="Nonsense Mediated Decay (NMD) independent of the Exon Junction Complex (EJC)"/>
</dbReference>
<dbReference type="Reactome" id="R-SPO-975957">
    <property type="pathway name" value="Nonsense Mediated Decay (NMD) enhanced by the Exon Junction Complex (EJC)"/>
</dbReference>
<dbReference type="PRO" id="PR:O14062"/>
<dbReference type="Proteomes" id="UP000002485">
    <property type="component" value="Chromosome III"/>
</dbReference>
<dbReference type="GO" id="GO:0022627">
    <property type="term" value="C:cytosolic small ribosomal subunit"/>
    <property type="evidence" value="ECO:0000269"/>
    <property type="project" value="PomBase"/>
</dbReference>
<dbReference type="GO" id="GO:0003735">
    <property type="term" value="F:structural constituent of ribosome"/>
    <property type="evidence" value="ECO:0000318"/>
    <property type="project" value="GO_Central"/>
</dbReference>
<dbReference type="GO" id="GO:0002181">
    <property type="term" value="P:cytoplasmic translation"/>
    <property type="evidence" value="ECO:0000266"/>
    <property type="project" value="PomBase"/>
</dbReference>
<dbReference type="GO" id="GO:1990145">
    <property type="term" value="P:maintenance of translational fidelity"/>
    <property type="evidence" value="ECO:0000318"/>
    <property type="project" value="GO_Central"/>
</dbReference>
<dbReference type="GO" id="GO:0042274">
    <property type="term" value="P:ribosomal small subunit biogenesis"/>
    <property type="evidence" value="ECO:0000318"/>
    <property type="project" value="GO_Central"/>
</dbReference>
<dbReference type="FunFam" id="3.30.1330.30:FF:000005">
    <property type="entry name" value="40S ribosomal protein S12"/>
    <property type="match status" value="1"/>
</dbReference>
<dbReference type="Gene3D" id="3.30.1330.30">
    <property type="match status" value="1"/>
</dbReference>
<dbReference type="InterPro" id="IPR029064">
    <property type="entry name" value="Ribosomal_eL30-like_sf"/>
</dbReference>
<dbReference type="InterPro" id="IPR004038">
    <property type="entry name" value="Ribosomal_eL8/eL30/eS12/Gad45"/>
</dbReference>
<dbReference type="InterPro" id="IPR000530">
    <property type="entry name" value="Ribosomal_eS12"/>
</dbReference>
<dbReference type="InterPro" id="IPR047860">
    <property type="entry name" value="Ribosomal_eS12_CS"/>
</dbReference>
<dbReference type="PANTHER" id="PTHR11843">
    <property type="entry name" value="40S RIBOSOMAL PROTEIN S12"/>
    <property type="match status" value="1"/>
</dbReference>
<dbReference type="Pfam" id="PF01248">
    <property type="entry name" value="Ribosomal_L7Ae"/>
    <property type="match status" value="1"/>
</dbReference>
<dbReference type="PRINTS" id="PR00972">
    <property type="entry name" value="RIBSOMALS12E"/>
</dbReference>
<dbReference type="SUPFAM" id="SSF55315">
    <property type="entry name" value="L30e-like"/>
    <property type="match status" value="1"/>
</dbReference>
<dbReference type="PROSITE" id="PS01189">
    <property type="entry name" value="RIBOSOMAL_S12E"/>
    <property type="match status" value="1"/>
</dbReference>
<accession>O14062</accession>
<feature type="chain" id="PRO_0000122338" description="Small ribosomal subunit protein eS12A">
    <location>
        <begin position="1"/>
        <end position="145"/>
    </location>
</feature>
<evidence type="ECO:0000250" key="1">
    <source>
        <dbReference type="UniProtKB" id="P48589"/>
    </source>
</evidence>
<evidence type="ECO:0000305" key="2"/>